<name>TRMD_IDILO</name>
<sequence length="252" mass="27902">MGKPLQVGVISLFPEMFSAVTDYGVTGRAIKEGLLTVSVWNPRDFTHDRHRTVDDRPYGGGPGMLMMVQPLVDAINAAKQSLGEDTPVIYLSPQGQKLDHSGVQHLSGNDRMILIAGRYEGIDERVIKQYVDAEWSIGDYVLSGGELPAMVLIDAVSRLIPGVLGHQDSAAEDSFASGLLDCPHYTRPETYNEQQVPPVLLSGDHEKIRRWRLQQSLGKTWLQRPELIHSLALTDEQETLLNEFIAQQSSGE</sequence>
<proteinExistence type="inferred from homology"/>
<comment type="function">
    <text evidence="1">Specifically methylates guanosine-37 in various tRNAs.</text>
</comment>
<comment type="catalytic activity">
    <reaction evidence="1">
        <text>guanosine(37) in tRNA + S-adenosyl-L-methionine = N(1)-methylguanosine(37) in tRNA + S-adenosyl-L-homocysteine + H(+)</text>
        <dbReference type="Rhea" id="RHEA:36899"/>
        <dbReference type="Rhea" id="RHEA-COMP:10145"/>
        <dbReference type="Rhea" id="RHEA-COMP:10147"/>
        <dbReference type="ChEBI" id="CHEBI:15378"/>
        <dbReference type="ChEBI" id="CHEBI:57856"/>
        <dbReference type="ChEBI" id="CHEBI:59789"/>
        <dbReference type="ChEBI" id="CHEBI:73542"/>
        <dbReference type="ChEBI" id="CHEBI:74269"/>
        <dbReference type="EC" id="2.1.1.228"/>
    </reaction>
</comment>
<comment type="subunit">
    <text evidence="1">Homodimer.</text>
</comment>
<comment type="subcellular location">
    <subcellularLocation>
        <location evidence="1">Cytoplasm</location>
    </subcellularLocation>
</comment>
<comment type="similarity">
    <text evidence="1">Belongs to the RNA methyltransferase TrmD family.</text>
</comment>
<dbReference type="EC" id="2.1.1.228" evidence="1"/>
<dbReference type="EMBL" id="AE017340">
    <property type="protein sequence ID" value="AAV82557.1"/>
    <property type="molecule type" value="Genomic_DNA"/>
</dbReference>
<dbReference type="SMR" id="Q5QUV0"/>
<dbReference type="STRING" id="283942.IL1724"/>
<dbReference type="KEGG" id="ilo:IL1724"/>
<dbReference type="eggNOG" id="COG0336">
    <property type="taxonomic scope" value="Bacteria"/>
</dbReference>
<dbReference type="HOGENOM" id="CLU_047363_0_1_6"/>
<dbReference type="Proteomes" id="UP000001171">
    <property type="component" value="Chromosome"/>
</dbReference>
<dbReference type="GO" id="GO:0005829">
    <property type="term" value="C:cytosol"/>
    <property type="evidence" value="ECO:0007669"/>
    <property type="project" value="TreeGrafter"/>
</dbReference>
<dbReference type="GO" id="GO:0052906">
    <property type="term" value="F:tRNA (guanine(37)-N1)-methyltransferase activity"/>
    <property type="evidence" value="ECO:0007669"/>
    <property type="project" value="UniProtKB-UniRule"/>
</dbReference>
<dbReference type="GO" id="GO:0002939">
    <property type="term" value="P:tRNA N1-guanine methylation"/>
    <property type="evidence" value="ECO:0007669"/>
    <property type="project" value="TreeGrafter"/>
</dbReference>
<dbReference type="CDD" id="cd18080">
    <property type="entry name" value="TrmD-like"/>
    <property type="match status" value="1"/>
</dbReference>
<dbReference type="FunFam" id="1.10.1270.20:FF:000001">
    <property type="entry name" value="tRNA (guanine-N(1)-)-methyltransferase"/>
    <property type="match status" value="1"/>
</dbReference>
<dbReference type="FunFam" id="3.40.1280.10:FF:000001">
    <property type="entry name" value="tRNA (guanine-N(1)-)-methyltransferase"/>
    <property type="match status" value="1"/>
</dbReference>
<dbReference type="Gene3D" id="3.40.1280.10">
    <property type="match status" value="1"/>
</dbReference>
<dbReference type="Gene3D" id="1.10.1270.20">
    <property type="entry name" value="tRNA(m1g37)methyltransferase, domain 2"/>
    <property type="match status" value="1"/>
</dbReference>
<dbReference type="HAMAP" id="MF_00605">
    <property type="entry name" value="TrmD"/>
    <property type="match status" value="1"/>
</dbReference>
<dbReference type="InterPro" id="IPR029028">
    <property type="entry name" value="Alpha/beta_knot_MTases"/>
</dbReference>
<dbReference type="InterPro" id="IPR023148">
    <property type="entry name" value="tRNA_m1G_MeTrfase_C_sf"/>
</dbReference>
<dbReference type="InterPro" id="IPR002649">
    <property type="entry name" value="tRNA_m1G_MeTrfase_TrmD"/>
</dbReference>
<dbReference type="InterPro" id="IPR029026">
    <property type="entry name" value="tRNA_m1G_MTases_N"/>
</dbReference>
<dbReference type="InterPro" id="IPR016009">
    <property type="entry name" value="tRNA_MeTrfase_TRMD/TRM10"/>
</dbReference>
<dbReference type="NCBIfam" id="NF000648">
    <property type="entry name" value="PRK00026.1"/>
    <property type="match status" value="1"/>
</dbReference>
<dbReference type="NCBIfam" id="TIGR00088">
    <property type="entry name" value="trmD"/>
    <property type="match status" value="1"/>
</dbReference>
<dbReference type="PANTHER" id="PTHR46417">
    <property type="entry name" value="TRNA (GUANINE-N(1)-)-METHYLTRANSFERASE"/>
    <property type="match status" value="1"/>
</dbReference>
<dbReference type="PANTHER" id="PTHR46417:SF1">
    <property type="entry name" value="TRNA (GUANINE-N(1)-)-METHYLTRANSFERASE"/>
    <property type="match status" value="1"/>
</dbReference>
<dbReference type="Pfam" id="PF01746">
    <property type="entry name" value="tRNA_m1G_MT"/>
    <property type="match status" value="1"/>
</dbReference>
<dbReference type="PIRSF" id="PIRSF000386">
    <property type="entry name" value="tRNA_mtase"/>
    <property type="match status" value="1"/>
</dbReference>
<dbReference type="SUPFAM" id="SSF75217">
    <property type="entry name" value="alpha/beta knot"/>
    <property type="match status" value="1"/>
</dbReference>
<evidence type="ECO:0000255" key="1">
    <source>
        <dbReference type="HAMAP-Rule" id="MF_00605"/>
    </source>
</evidence>
<keyword id="KW-0963">Cytoplasm</keyword>
<keyword id="KW-0489">Methyltransferase</keyword>
<keyword id="KW-1185">Reference proteome</keyword>
<keyword id="KW-0949">S-adenosyl-L-methionine</keyword>
<keyword id="KW-0808">Transferase</keyword>
<keyword id="KW-0819">tRNA processing</keyword>
<feature type="chain" id="PRO_0000060390" description="tRNA (guanine-N(1)-)-methyltransferase">
    <location>
        <begin position="1"/>
        <end position="252"/>
    </location>
</feature>
<feature type="binding site" evidence="1">
    <location>
        <position position="117"/>
    </location>
    <ligand>
        <name>S-adenosyl-L-methionine</name>
        <dbReference type="ChEBI" id="CHEBI:59789"/>
    </ligand>
</feature>
<feature type="binding site" evidence="1">
    <location>
        <begin position="137"/>
        <end position="142"/>
    </location>
    <ligand>
        <name>S-adenosyl-L-methionine</name>
        <dbReference type="ChEBI" id="CHEBI:59789"/>
    </ligand>
</feature>
<organism>
    <name type="scientific">Idiomarina loihiensis (strain ATCC BAA-735 / DSM 15497 / L2-TR)</name>
    <dbReference type="NCBI Taxonomy" id="283942"/>
    <lineage>
        <taxon>Bacteria</taxon>
        <taxon>Pseudomonadati</taxon>
        <taxon>Pseudomonadota</taxon>
        <taxon>Gammaproteobacteria</taxon>
        <taxon>Alteromonadales</taxon>
        <taxon>Idiomarinaceae</taxon>
        <taxon>Idiomarina</taxon>
    </lineage>
</organism>
<protein>
    <recommendedName>
        <fullName evidence="1">tRNA (guanine-N(1)-)-methyltransferase</fullName>
        <ecNumber evidence="1">2.1.1.228</ecNumber>
    </recommendedName>
    <alternativeName>
        <fullName evidence="1">M1G-methyltransferase</fullName>
    </alternativeName>
    <alternativeName>
        <fullName evidence="1">tRNA [GM37] methyltransferase</fullName>
    </alternativeName>
</protein>
<accession>Q5QUV0</accession>
<reference key="1">
    <citation type="journal article" date="2004" name="Proc. Natl. Acad. Sci. U.S.A.">
        <title>Genome sequence of the deep-sea gamma-proteobacterium Idiomarina loihiensis reveals amino acid fermentation as a source of carbon and energy.</title>
        <authorList>
            <person name="Hou S."/>
            <person name="Saw J.H."/>
            <person name="Lee K.S."/>
            <person name="Freitas T.A."/>
            <person name="Belisle C."/>
            <person name="Kawarabayasi Y."/>
            <person name="Donachie S.P."/>
            <person name="Pikina A."/>
            <person name="Galperin M.Y."/>
            <person name="Koonin E.V."/>
            <person name="Makarova K.S."/>
            <person name="Omelchenko M.V."/>
            <person name="Sorokin A."/>
            <person name="Wolf Y.I."/>
            <person name="Li Q.X."/>
            <person name="Keum Y.S."/>
            <person name="Campbell S."/>
            <person name="Denery J."/>
            <person name="Aizawa S."/>
            <person name="Shibata S."/>
            <person name="Malahoff A."/>
            <person name="Alam M."/>
        </authorList>
    </citation>
    <scope>NUCLEOTIDE SEQUENCE [LARGE SCALE GENOMIC DNA]</scope>
    <source>
        <strain>ATCC BAA-735 / DSM 15497 / L2-TR</strain>
    </source>
</reference>
<gene>
    <name evidence="1" type="primary">trmD</name>
    <name type="ordered locus">IL1724</name>
</gene>